<proteinExistence type="evidence at transcript level"/>
<protein>
    <recommendedName>
        <fullName>Kinesin-like protein KIF2A</fullName>
    </recommendedName>
</protein>
<dbReference type="EMBL" id="CR859241">
    <property type="protein sequence ID" value="CAH91421.1"/>
    <property type="molecule type" value="mRNA"/>
</dbReference>
<dbReference type="RefSeq" id="NP_001127415.1">
    <property type="nucleotide sequence ID" value="NM_001133943.2"/>
</dbReference>
<dbReference type="SMR" id="Q5R9Y9"/>
<dbReference type="FunCoup" id="Q5R9Y9">
    <property type="interactions" value="2893"/>
</dbReference>
<dbReference type="STRING" id="9601.ENSPPYP00000017314"/>
<dbReference type="Ensembl" id="ENSPPYT00000034450.1">
    <property type="protein sequence ID" value="ENSPPYP00000042085.1"/>
    <property type="gene ID" value="ENSPPYG00000015496.3"/>
</dbReference>
<dbReference type="GeneID" id="100174485"/>
<dbReference type="KEGG" id="pon:100174485"/>
<dbReference type="CTD" id="3796"/>
<dbReference type="eggNOG" id="KOG0246">
    <property type="taxonomic scope" value="Eukaryota"/>
</dbReference>
<dbReference type="GeneTree" id="ENSGT00940000155570"/>
<dbReference type="InParanoid" id="Q5R9Y9"/>
<dbReference type="OMA" id="NWDTARM"/>
<dbReference type="OrthoDB" id="3176171at2759"/>
<dbReference type="Proteomes" id="UP000001595">
    <property type="component" value="Chromosome 5"/>
</dbReference>
<dbReference type="GO" id="GO:0120103">
    <property type="term" value="C:centriolar subdistal appendage"/>
    <property type="evidence" value="ECO:0007669"/>
    <property type="project" value="Ensembl"/>
</dbReference>
<dbReference type="GO" id="GO:0005814">
    <property type="term" value="C:centriole"/>
    <property type="evidence" value="ECO:0007669"/>
    <property type="project" value="Ensembl"/>
</dbReference>
<dbReference type="GO" id="GO:0005813">
    <property type="term" value="C:centrosome"/>
    <property type="evidence" value="ECO:0007669"/>
    <property type="project" value="UniProtKB-SubCell"/>
</dbReference>
<dbReference type="GO" id="GO:0036064">
    <property type="term" value="C:ciliary basal body"/>
    <property type="evidence" value="ECO:0007669"/>
    <property type="project" value="Ensembl"/>
</dbReference>
<dbReference type="GO" id="GO:0005829">
    <property type="term" value="C:cytosol"/>
    <property type="evidence" value="ECO:0007669"/>
    <property type="project" value="Ensembl"/>
</dbReference>
<dbReference type="GO" id="GO:0072686">
    <property type="term" value="C:mitotic spindle"/>
    <property type="evidence" value="ECO:0007669"/>
    <property type="project" value="Ensembl"/>
</dbReference>
<dbReference type="GO" id="GO:0016604">
    <property type="term" value="C:nuclear body"/>
    <property type="evidence" value="ECO:0007669"/>
    <property type="project" value="Ensembl"/>
</dbReference>
<dbReference type="GO" id="GO:0005730">
    <property type="term" value="C:nucleolus"/>
    <property type="evidence" value="ECO:0007669"/>
    <property type="project" value="Ensembl"/>
</dbReference>
<dbReference type="GO" id="GO:0005876">
    <property type="term" value="C:spindle microtubule"/>
    <property type="evidence" value="ECO:0007669"/>
    <property type="project" value="Ensembl"/>
</dbReference>
<dbReference type="GO" id="GO:0000922">
    <property type="term" value="C:spindle pole"/>
    <property type="evidence" value="ECO:0007669"/>
    <property type="project" value="UniProtKB-SubCell"/>
</dbReference>
<dbReference type="GO" id="GO:0005524">
    <property type="term" value="F:ATP binding"/>
    <property type="evidence" value="ECO:0007669"/>
    <property type="project" value="UniProtKB-KW"/>
</dbReference>
<dbReference type="GO" id="GO:0008017">
    <property type="term" value="F:microtubule binding"/>
    <property type="evidence" value="ECO:0007669"/>
    <property type="project" value="Ensembl"/>
</dbReference>
<dbReference type="GO" id="GO:0003777">
    <property type="term" value="F:microtubule motor activity"/>
    <property type="evidence" value="ECO:0007669"/>
    <property type="project" value="InterPro"/>
</dbReference>
<dbReference type="GO" id="GO:0030154">
    <property type="term" value="P:cell differentiation"/>
    <property type="evidence" value="ECO:0007669"/>
    <property type="project" value="UniProtKB-KW"/>
</dbReference>
<dbReference type="GO" id="GO:0051301">
    <property type="term" value="P:cell division"/>
    <property type="evidence" value="ECO:0007669"/>
    <property type="project" value="UniProtKB-KW"/>
</dbReference>
<dbReference type="GO" id="GO:0007019">
    <property type="term" value="P:microtubule depolymerization"/>
    <property type="evidence" value="ECO:0007669"/>
    <property type="project" value="TreeGrafter"/>
</dbReference>
<dbReference type="GO" id="GO:0007018">
    <property type="term" value="P:microtubule-based movement"/>
    <property type="evidence" value="ECO:0007669"/>
    <property type="project" value="InterPro"/>
</dbReference>
<dbReference type="GO" id="GO:0090307">
    <property type="term" value="P:mitotic spindle assembly"/>
    <property type="evidence" value="ECO:0000250"/>
    <property type="project" value="UniProtKB"/>
</dbReference>
<dbReference type="GO" id="GO:0007052">
    <property type="term" value="P:mitotic spindle organization"/>
    <property type="evidence" value="ECO:0000250"/>
    <property type="project" value="UniProtKB"/>
</dbReference>
<dbReference type="GO" id="GO:0007399">
    <property type="term" value="P:nervous system development"/>
    <property type="evidence" value="ECO:0007669"/>
    <property type="project" value="UniProtKB-KW"/>
</dbReference>
<dbReference type="GO" id="GO:0030334">
    <property type="term" value="P:regulation of cell migration"/>
    <property type="evidence" value="ECO:0007669"/>
    <property type="project" value="Ensembl"/>
</dbReference>
<dbReference type="CDD" id="cd01367">
    <property type="entry name" value="KISc_KIF2_like"/>
    <property type="match status" value="1"/>
</dbReference>
<dbReference type="FunFam" id="3.40.850.10:FF:000006">
    <property type="entry name" value="Kinesin-like protein"/>
    <property type="match status" value="1"/>
</dbReference>
<dbReference type="Gene3D" id="3.40.850.10">
    <property type="entry name" value="Kinesin motor domain"/>
    <property type="match status" value="1"/>
</dbReference>
<dbReference type="InterPro" id="IPR054473">
    <property type="entry name" value="KIF2A-like_N"/>
</dbReference>
<dbReference type="InterPro" id="IPR027640">
    <property type="entry name" value="Kinesin-like_fam"/>
</dbReference>
<dbReference type="InterPro" id="IPR019821">
    <property type="entry name" value="Kinesin_motor_CS"/>
</dbReference>
<dbReference type="InterPro" id="IPR001752">
    <property type="entry name" value="Kinesin_motor_dom"/>
</dbReference>
<dbReference type="InterPro" id="IPR036961">
    <property type="entry name" value="Kinesin_motor_dom_sf"/>
</dbReference>
<dbReference type="InterPro" id="IPR027417">
    <property type="entry name" value="P-loop_NTPase"/>
</dbReference>
<dbReference type="PANTHER" id="PTHR47971:SF24">
    <property type="entry name" value="KINESIN-LIKE PROTEIN"/>
    <property type="match status" value="1"/>
</dbReference>
<dbReference type="PANTHER" id="PTHR47971">
    <property type="entry name" value="KINESIN-RELATED PROTEIN 6"/>
    <property type="match status" value="1"/>
</dbReference>
<dbReference type="Pfam" id="PF22923">
    <property type="entry name" value="KIF2A-like_1st"/>
    <property type="match status" value="1"/>
</dbReference>
<dbReference type="Pfam" id="PF00225">
    <property type="entry name" value="Kinesin"/>
    <property type="match status" value="1"/>
</dbReference>
<dbReference type="PRINTS" id="PR00380">
    <property type="entry name" value="KINESINHEAVY"/>
</dbReference>
<dbReference type="SMART" id="SM00129">
    <property type="entry name" value="KISc"/>
    <property type="match status" value="1"/>
</dbReference>
<dbReference type="SUPFAM" id="SSF52540">
    <property type="entry name" value="P-loop containing nucleoside triphosphate hydrolases"/>
    <property type="match status" value="1"/>
</dbReference>
<dbReference type="PROSITE" id="PS00411">
    <property type="entry name" value="KINESIN_MOTOR_1"/>
    <property type="match status" value="1"/>
</dbReference>
<dbReference type="PROSITE" id="PS50067">
    <property type="entry name" value="KINESIN_MOTOR_2"/>
    <property type="match status" value="1"/>
</dbReference>
<gene>
    <name evidence="2" type="primary">KIF2A</name>
</gene>
<evidence type="ECO:0000250" key="1"/>
<evidence type="ECO:0000250" key="2">
    <source>
        <dbReference type="UniProtKB" id="O00139"/>
    </source>
</evidence>
<evidence type="ECO:0000250" key="3">
    <source>
        <dbReference type="UniProtKB" id="P28740"/>
    </source>
</evidence>
<evidence type="ECO:0000255" key="4"/>
<evidence type="ECO:0000255" key="5">
    <source>
        <dbReference type="PROSITE-ProRule" id="PRU00283"/>
    </source>
</evidence>
<evidence type="ECO:0000256" key="6">
    <source>
        <dbReference type="SAM" id="MobiDB-lite"/>
    </source>
</evidence>
<evidence type="ECO:0000312" key="7">
    <source>
        <dbReference type="EMBL" id="CAH91421.1"/>
    </source>
</evidence>
<name>KIF2A_PONAB</name>
<keyword id="KW-0007">Acetylation</keyword>
<keyword id="KW-0067">ATP-binding</keyword>
<keyword id="KW-0131">Cell cycle</keyword>
<keyword id="KW-0132">Cell division</keyword>
<keyword id="KW-0175">Coiled coil</keyword>
<keyword id="KW-0963">Cytoplasm</keyword>
<keyword id="KW-0206">Cytoskeleton</keyword>
<keyword id="KW-0217">Developmental protein</keyword>
<keyword id="KW-0221">Differentiation</keyword>
<keyword id="KW-0493">Microtubule</keyword>
<keyword id="KW-0498">Mitosis</keyword>
<keyword id="KW-0505">Motor protein</keyword>
<keyword id="KW-0524">Neurogenesis</keyword>
<keyword id="KW-0547">Nucleotide-binding</keyword>
<keyword id="KW-0597">Phosphoprotein</keyword>
<keyword id="KW-1185">Reference proteome</keyword>
<organism>
    <name type="scientific">Pongo abelii</name>
    <name type="common">Sumatran orangutan</name>
    <name type="synonym">Pongo pygmaeus abelii</name>
    <dbReference type="NCBI Taxonomy" id="9601"/>
    <lineage>
        <taxon>Eukaryota</taxon>
        <taxon>Metazoa</taxon>
        <taxon>Chordata</taxon>
        <taxon>Craniata</taxon>
        <taxon>Vertebrata</taxon>
        <taxon>Euteleostomi</taxon>
        <taxon>Mammalia</taxon>
        <taxon>Eutheria</taxon>
        <taxon>Euarchontoglires</taxon>
        <taxon>Primates</taxon>
        <taxon>Haplorrhini</taxon>
        <taxon>Catarrhini</taxon>
        <taxon>Hominidae</taxon>
        <taxon>Pongo</taxon>
    </lineage>
</organism>
<sequence length="744" mass="84099">MATANFGKIQIGIYVEIKRSDGRIHQAMVTSLNEDNESVTVEWIENGDTKGKEIDLESIFSLNPDLVPDEEIEPSPETPPPPASSAKVNKIVKNRRTVASIKNDPPPRDNRVVGSARARPSQFPEQSSSAQQNGSVSDISPVQAAKKEFGPPSRRKSNCVKEVEKLQEKREKRRLQQQELREKRAQDVDATNPNYEIMCMIRDFRGSLDYRPLTTADPIDEHRICVCVRKRPLNKKETQMKDLDVITIPSKDVVMVHEPKQKVDLTRYLENQTFRFDYAFDDSAPNEMVYRFTARPLVETIFERGMATCFAYGQTGSGKTHTMGGDFSGKNQDCSKGIYALAARDVFLMLKKPNYKKLELQVYATFFEIYSGKVFDLLNRKTKLRVLEDGKQQVQVVGLQEREVKCVEDVLKLIDIGNSCRTSGQTSANAHSSRSHAVFQIILRRKGKLHGKFSLIDLAGNERGADTSSADRQTRLEGAEINKSLLALKECIRALGRNKPHTPFRASKLTQVLRDSFIGENSRTCMIATISPGMASCENTLNTLRYANRVKEFGISPSDIPFSQGSGSRPDLSPSYEYDDFSPSVTRVKELTVDPTAAGDVRPIMHHPPNQIDDLETQWGVGSSPQRDDLKLLCEQNEEEVSPQLFTFHEAVSQMVEMEEQVVEDHRAVFQESIRWLEDEKALLEMTEEVDYDVDSYATQLEAILEQKIDILTELRDKVKSFRAALQEEEQASKQINPKRPRAL</sequence>
<comment type="function">
    <text evidence="2">Plus end-directed microtubule-dependent motor required for normal brain development. May regulate microtubule dynamics during axonal growth. Required for normal progression through mitosis. Required for normal congress of chromosomes at the metaphase plate. Required for normal spindle dynamics during mitosis. Promotes spindle turnover. Implicated in formation of bipolar mitotic spindles. Has microtubule depolymerization activity (By similarity).</text>
</comment>
<comment type="subunit">
    <text evidence="2">Interacts with AURKA and PLK1. Interacts with PSRC1. Interacts with MCRS1; the interaction enhances recruitment of KIF2A to the minus ends of spindle microtubules which promotes chromosome alignment.</text>
</comment>
<comment type="subcellular location">
    <subcellularLocation>
        <location evidence="3">Cytoplasm</location>
    </subcellularLocation>
    <subcellularLocation>
        <location evidence="3">Cytoplasm</location>
        <location evidence="3">Cytoskeleton</location>
        <location evidence="3">Microtubule organizing center</location>
        <location evidence="3">Centrosome</location>
    </subcellularLocation>
    <subcellularLocation>
        <location evidence="1">Cytoplasm</location>
        <location evidence="1">Cytoskeleton</location>
        <location evidence="1">Spindle pole</location>
    </subcellularLocation>
    <subcellularLocation>
        <location evidence="1">Cytoplasm</location>
        <location evidence="1">Cytoskeleton</location>
        <location evidence="1">Spindle</location>
    </subcellularLocation>
    <text evidence="1">Localized to the spindle microtubules and spindle poles from prophase to metaphase. Efficient targeting to spindle microtubules and spindle poles requires the kinase activity of PLK1. Recruited to mitotic spindles by interaction with PSRC1 (By similarity).</text>
</comment>
<comment type="similarity">
    <text evidence="5">Belongs to the TRAFAC class myosin-kinesin ATPase superfamily. Kinesin family. MCAK/KIF2 subfamily.</text>
</comment>
<accession>Q5R9Y9</accession>
<feature type="chain" id="PRO_0000306272" description="Kinesin-like protein KIF2A">
    <location>
        <begin position="1"/>
        <end position="744"/>
    </location>
</feature>
<feature type="domain" description="Kinesin motor" evidence="5">
    <location>
        <begin position="223"/>
        <end position="553"/>
    </location>
</feature>
<feature type="region of interest" description="Disordered" evidence="6">
    <location>
        <begin position="66"/>
        <end position="186"/>
    </location>
</feature>
<feature type="coiled-coil region" evidence="4">
    <location>
        <begin position="154"/>
        <end position="187"/>
    </location>
</feature>
<feature type="coiled-coil region" evidence="4">
    <location>
        <begin position="698"/>
        <end position="737"/>
    </location>
</feature>
<feature type="compositionally biased region" description="Polar residues" evidence="6">
    <location>
        <begin position="123"/>
        <end position="140"/>
    </location>
</feature>
<feature type="compositionally biased region" description="Basic and acidic residues" evidence="6">
    <location>
        <begin position="159"/>
        <end position="186"/>
    </location>
</feature>
<feature type="binding site" evidence="5">
    <location>
        <begin position="313"/>
        <end position="320"/>
    </location>
    <ligand>
        <name>ATP</name>
        <dbReference type="ChEBI" id="CHEBI:30616"/>
    </ligand>
</feature>
<feature type="modified residue" description="Phosphoserine" evidence="2">
    <location>
        <position position="75"/>
    </location>
</feature>
<feature type="modified residue" description="Phosphothreonine" evidence="2">
    <location>
        <position position="78"/>
    </location>
</feature>
<feature type="modified residue" description="Phosphothreonine" evidence="2">
    <location>
        <position position="97"/>
    </location>
</feature>
<feature type="modified residue" description="Phosphoserine" evidence="2">
    <location>
        <position position="100"/>
    </location>
</feature>
<feature type="modified residue" description="N6-acetyllysine" evidence="3">
    <location>
        <position position="102"/>
    </location>
</feature>
<feature type="modified residue" description="Phosphoserine" evidence="2">
    <location>
        <position position="135"/>
    </location>
</feature>
<feature type="modified residue" description="Phosphoserine" evidence="2">
    <location>
        <position position="140"/>
    </location>
</feature>
<reference evidence="7" key="1">
    <citation type="submission" date="2004-11" db="EMBL/GenBank/DDBJ databases">
        <authorList>
            <consortium name="The German cDNA consortium"/>
        </authorList>
    </citation>
    <scope>NUCLEOTIDE SEQUENCE [LARGE SCALE MRNA]</scope>
    <source>
        <tissue evidence="7">Brain cortex</tissue>
    </source>
</reference>